<evidence type="ECO:0000255" key="1">
    <source>
        <dbReference type="HAMAP-Rule" id="MF_00274"/>
    </source>
</evidence>
<gene>
    <name type="ordered locus">BUsg_467</name>
</gene>
<protein>
    <recommendedName>
        <fullName evidence="1">Nucleoid-associated protein BUsg_467</fullName>
    </recommendedName>
</protein>
<organism>
    <name type="scientific">Buchnera aphidicola subsp. Schizaphis graminum (strain Sg)</name>
    <dbReference type="NCBI Taxonomy" id="198804"/>
    <lineage>
        <taxon>Bacteria</taxon>
        <taxon>Pseudomonadati</taxon>
        <taxon>Pseudomonadota</taxon>
        <taxon>Gammaproteobacteria</taxon>
        <taxon>Enterobacterales</taxon>
        <taxon>Erwiniaceae</taxon>
        <taxon>Buchnera</taxon>
    </lineage>
</organism>
<sequence length="109" mass="11866">MFTKGGLGNLMKQAQQMQEKMAKVQEEIAKMEVTGEAGAGLVKVTINGAHNCRRVEVDPSLLKDDKDMLEDLAAAAFNDATRRISEVQKKKMSAISTGMQLPTGFNIPI</sequence>
<keyword id="KW-0963">Cytoplasm</keyword>
<keyword id="KW-0238">DNA-binding</keyword>
<comment type="function">
    <text evidence="1">Binds to DNA and alters its conformation. May be involved in regulation of gene expression, nucleoid organization and DNA protection.</text>
</comment>
<comment type="subunit">
    <text evidence="1">Homodimer.</text>
</comment>
<comment type="subcellular location">
    <subcellularLocation>
        <location evidence="1">Cytoplasm</location>
        <location evidence="1">Nucleoid</location>
    </subcellularLocation>
</comment>
<comment type="similarity">
    <text evidence="1">Belongs to the YbaB/EbfC family.</text>
</comment>
<proteinExistence type="inferred from homology"/>
<reference key="1">
    <citation type="journal article" date="2002" name="Science">
        <title>50 million years of genomic stasis in endosymbiotic bacteria.</title>
        <authorList>
            <person name="Tamas I."/>
            <person name="Klasson L."/>
            <person name="Canbaeck B."/>
            <person name="Naeslund A.K."/>
            <person name="Eriksson A.-S."/>
            <person name="Wernegreen J.J."/>
            <person name="Sandstroem J.P."/>
            <person name="Moran N.A."/>
            <person name="Andersson S.G.E."/>
        </authorList>
    </citation>
    <scope>NUCLEOTIDE SEQUENCE [LARGE SCALE GENOMIC DNA]</scope>
    <source>
        <strain>Sg</strain>
    </source>
</reference>
<dbReference type="EMBL" id="AE013218">
    <property type="protein sequence ID" value="AAM68010.1"/>
    <property type="molecule type" value="Genomic_DNA"/>
</dbReference>
<dbReference type="RefSeq" id="WP_011053977.1">
    <property type="nucleotide sequence ID" value="NC_004061.1"/>
</dbReference>
<dbReference type="SMR" id="Q8K982"/>
<dbReference type="STRING" id="198804.BUsg_467"/>
<dbReference type="GeneID" id="93003938"/>
<dbReference type="KEGG" id="bas:BUsg_467"/>
<dbReference type="eggNOG" id="COG0718">
    <property type="taxonomic scope" value="Bacteria"/>
</dbReference>
<dbReference type="HOGENOM" id="CLU_140930_0_0_6"/>
<dbReference type="Proteomes" id="UP000000416">
    <property type="component" value="Chromosome"/>
</dbReference>
<dbReference type="GO" id="GO:0043590">
    <property type="term" value="C:bacterial nucleoid"/>
    <property type="evidence" value="ECO:0007669"/>
    <property type="project" value="UniProtKB-UniRule"/>
</dbReference>
<dbReference type="GO" id="GO:0005829">
    <property type="term" value="C:cytosol"/>
    <property type="evidence" value="ECO:0007669"/>
    <property type="project" value="TreeGrafter"/>
</dbReference>
<dbReference type="GO" id="GO:0003677">
    <property type="term" value="F:DNA binding"/>
    <property type="evidence" value="ECO:0007669"/>
    <property type="project" value="UniProtKB-UniRule"/>
</dbReference>
<dbReference type="FunFam" id="3.30.1310.10:FF:000001">
    <property type="entry name" value="Nucleoid-associated protein YbaB"/>
    <property type="match status" value="1"/>
</dbReference>
<dbReference type="Gene3D" id="3.30.1310.10">
    <property type="entry name" value="Nucleoid-associated protein YbaB-like domain"/>
    <property type="match status" value="1"/>
</dbReference>
<dbReference type="HAMAP" id="MF_00274">
    <property type="entry name" value="DNA_YbaB_EbfC"/>
    <property type="match status" value="1"/>
</dbReference>
<dbReference type="InterPro" id="IPR036894">
    <property type="entry name" value="YbaB-like_sf"/>
</dbReference>
<dbReference type="InterPro" id="IPR004401">
    <property type="entry name" value="YbaB/EbfC"/>
</dbReference>
<dbReference type="NCBIfam" id="TIGR00103">
    <property type="entry name" value="DNA_YbaB_EbfC"/>
    <property type="match status" value="1"/>
</dbReference>
<dbReference type="PANTHER" id="PTHR33449">
    <property type="entry name" value="NUCLEOID-ASSOCIATED PROTEIN YBAB"/>
    <property type="match status" value="1"/>
</dbReference>
<dbReference type="PANTHER" id="PTHR33449:SF1">
    <property type="entry name" value="NUCLEOID-ASSOCIATED PROTEIN YBAB"/>
    <property type="match status" value="1"/>
</dbReference>
<dbReference type="Pfam" id="PF02575">
    <property type="entry name" value="YbaB_DNA_bd"/>
    <property type="match status" value="1"/>
</dbReference>
<dbReference type="PIRSF" id="PIRSF004555">
    <property type="entry name" value="UCP004555"/>
    <property type="match status" value="1"/>
</dbReference>
<dbReference type="SUPFAM" id="SSF82607">
    <property type="entry name" value="YbaB-like"/>
    <property type="match status" value="1"/>
</dbReference>
<accession>Q8K982</accession>
<feature type="chain" id="PRO_0000170374" description="Nucleoid-associated protein BUsg_467">
    <location>
        <begin position="1"/>
        <end position="109"/>
    </location>
</feature>
<name>Y467_BUCAP</name>